<dbReference type="EMBL" id="M27156">
    <property type="protein sequence ID" value="AAA40805.1"/>
    <property type="molecule type" value="mRNA"/>
</dbReference>
<dbReference type="EMBL" id="AY370611">
    <property type="protein sequence ID" value="AAQ67415.1"/>
    <property type="molecule type" value="Genomic_DNA"/>
</dbReference>
<dbReference type="EMBL" id="BC062035">
    <property type="protein sequence ID" value="AAH62035.1"/>
    <property type="molecule type" value="mRNA"/>
</dbReference>
<dbReference type="PIR" id="A32602">
    <property type="entry name" value="A32602"/>
</dbReference>
<dbReference type="RefSeq" id="NP_061998.1">
    <molecule id="P15399-1"/>
    <property type="nucleotide sequence ID" value="NM_019125.1"/>
</dbReference>
<dbReference type="RefSeq" id="XP_008771461.1">
    <property type="nucleotide sequence ID" value="XM_008773239.2"/>
</dbReference>
<dbReference type="SMR" id="P15399"/>
<dbReference type="BioGRID" id="248446">
    <property type="interactions" value="1"/>
</dbReference>
<dbReference type="FunCoup" id="P15399">
    <property type="interactions" value="89"/>
</dbReference>
<dbReference type="IntAct" id="P15399">
    <property type="interactions" value="1"/>
</dbReference>
<dbReference type="STRING" id="10116.ENSRNOP00000042730"/>
<dbReference type="PhosphoSitePlus" id="P15399"/>
<dbReference type="PaxDb" id="10116-ENSRNOP00000042730"/>
<dbReference type="GeneID" id="54193"/>
<dbReference type="KEGG" id="rno:54193"/>
<dbReference type="AGR" id="RGD:708571"/>
<dbReference type="CTD" id="54192"/>
<dbReference type="RGD" id="708571">
    <property type="gene designation" value="Pbsn"/>
</dbReference>
<dbReference type="VEuPathDB" id="HostDB:ENSRNOG00000003713"/>
<dbReference type="eggNOG" id="ENOG502TDZD">
    <property type="taxonomic scope" value="Eukaryota"/>
</dbReference>
<dbReference type="HOGENOM" id="CLU_094061_4_2_1"/>
<dbReference type="InParanoid" id="P15399"/>
<dbReference type="OMA" id="IKFYAKF"/>
<dbReference type="OrthoDB" id="9450562at2759"/>
<dbReference type="PhylomeDB" id="P15399"/>
<dbReference type="TreeFam" id="TF338197"/>
<dbReference type="PRO" id="PR:P15399"/>
<dbReference type="Proteomes" id="UP000002494">
    <property type="component" value="Chromosome X"/>
</dbReference>
<dbReference type="Bgee" id="ENSRNOG00000003713">
    <property type="expression patterns" value="Expressed in liver"/>
</dbReference>
<dbReference type="GO" id="GO:0005615">
    <property type="term" value="C:extracellular space"/>
    <property type="evidence" value="ECO:0000318"/>
    <property type="project" value="GO_Central"/>
</dbReference>
<dbReference type="GO" id="GO:0005634">
    <property type="term" value="C:nucleus"/>
    <property type="evidence" value="ECO:0007669"/>
    <property type="project" value="UniProtKB-SubCell"/>
</dbReference>
<dbReference type="GO" id="GO:0005549">
    <property type="term" value="F:odorant binding"/>
    <property type="evidence" value="ECO:0000318"/>
    <property type="project" value="GO_Central"/>
</dbReference>
<dbReference type="GO" id="GO:0036094">
    <property type="term" value="F:small molecule binding"/>
    <property type="evidence" value="ECO:0007669"/>
    <property type="project" value="InterPro"/>
</dbReference>
<dbReference type="CDD" id="cd19427">
    <property type="entry name" value="lipocalin_OBP-like"/>
    <property type="match status" value="1"/>
</dbReference>
<dbReference type="Gene3D" id="2.40.128.20">
    <property type="match status" value="1"/>
</dbReference>
<dbReference type="InterPro" id="IPR012674">
    <property type="entry name" value="Calycin"/>
</dbReference>
<dbReference type="InterPro" id="IPR002345">
    <property type="entry name" value="Lipocalin"/>
</dbReference>
<dbReference type="InterPro" id="IPR022272">
    <property type="entry name" value="Lipocalin_CS"/>
</dbReference>
<dbReference type="InterPro" id="IPR000566">
    <property type="entry name" value="Lipocln_cytosolic_FA-bd_dom"/>
</dbReference>
<dbReference type="InterPro" id="IPR002448">
    <property type="entry name" value="OBP-like"/>
</dbReference>
<dbReference type="PANTHER" id="PTHR11430">
    <property type="entry name" value="LIPOCALIN"/>
    <property type="match status" value="1"/>
</dbReference>
<dbReference type="PANTHER" id="PTHR11430:SF132">
    <property type="entry name" value="PROBASIN"/>
    <property type="match status" value="1"/>
</dbReference>
<dbReference type="Pfam" id="PF00061">
    <property type="entry name" value="Lipocalin"/>
    <property type="match status" value="1"/>
</dbReference>
<dbReference type="PRINTS" id="PR01173">
    <property type="entry name" value="ODORANTBNDNG"/>
</dbReference>
<dbReference type="SUPFAM" id="SSF50814">
    <property type="entry name" value="Lipocalins"/>
    <property type="match status" value="1"/>
</dbReference>
<dbReference type="PROSITE" id="PS00213">
    <property type="entry name" value="LIPOCALIN"/>
    <property type="match status" value="1"/>
</dbReference>
<proteinExistence type="evidence at protein level"/>
<organism>
    <name type="scientific">Rattus norvegicus</name>
    <name type="common">Rat</name>
    <dbReference type="NCBI Taxonomy" id="10116"/>
    <lineage>
        <taxon>Eukaryota</taxon>
        <taxon>Metazoa</taxon>
        <taxon>Chordata</taxon>
        <taxon>Craniata</taxon>
        <taxon>Vertebrata</taxon>
        <taxon>Euteleostomi</taxon>
        <taxon>Mammalia</taxon>
        <taxon>Eutheria</taxon>
        <taxon>Euarchontoglires</taxon>
        <taxon>Glires</taxon>
        <taxon>Rodentia</taxon>
        <taxon>Myomorpha</taxon>
        <taxon>Muroidea</taxon>
        <taxon>Muridae</taxon>
        <taxon>Murinae</taxon>
        <taxon>Rattus</taxon>
    </lineage>
</organism>
<accession>P15399</accession>
<accession>Q53Z30</accession>
<gene>
    <name type="primary">Pbsn</name>
    <name type="synonym">Prbs</name>
</gene>
<evidence type="ECO:0000250" key="1"/>
<evidence type="ECO:0000269" key="2">
    <source>
    </source>
</evidence>
<evidence type="ECO:0000303" key="3">
    <source>
    </source>
</evidence>
<evidence type="ECO:0000305" key="4"/>
<keyword id="KW-0024">Alternative initiation</keyword>
<keyword id="KW-0903">Direct protein sequencing</keyword>
<keyword id="KW-1015">Disulfide bond</keyword>
<keyword id="KW-0539">Nucleus</keyword>
<keyword id="KW-1185">Reference proteome</keyword>
<keyword id="KW-0964">Secreted</keyword>
<keyword id="KW-0732">Signal</keyword>
<feature type="signal peptide" evidence="2">
    <location>
        <begin position="1"/>
        <end position="17"/>
    </location>
</feature>
<feature type="chain" id="PRO_0000017955" description="Probasin">
    <location>
        <begin position="18"/>
        <end position="177"/>
    </location>
</feature>
<feature type="disulfide bond" evidence="1">
    <location>
        <begin position="79"/>
        <end position="170"/>
    </location>
</feature>
<feature type="splice variant" id="VSP_018809" description="In isoform 2." evidence="3">
    <location>
        <begin position="1"/>
        <end position="17"/>
    </location>
</feature>
<protein>
    <recommendedName>
        <fullName>Probasin</fullName>
        <shortName>PB</shortName>
    </recommendedName>
    <alternativeName>
        <fullName>M-40</fullName>
    </alternativeName>
</protein>
<sequence>MRVILLLLTLDVLGVSSMMTDKNLKKKIEGNWRTVYLAASSVEKINEGSPLRTYFRRIECGKRCNRINLYFYIKKGAKCQQFKIVGRRSQDVYYAKYEGSTAFMLKTVNEKILLFDYFNRNRRNDVTRVAGVLAKGRQLTKDEMTEYMNFVEEMGIEDENVQRVMDTDTCPNKIRIR</sequence>
<reference key="1">
    <citation type="journal article" date="1989" name="Proc. Natl. Acad. Sci. U.S.A.">
        <title>Regulation of a bifunctional mRNA results in synthesis of secreted and nuclear probasin.</title>
        <authorList>
            <person name="Spence A.M."/>
            <person name="Sheppard P.C."/>
            <person name="Davie J.R."/>
            <person name="Matuo Y."/>
            <person name="Nishi N."/>
            <person name="McKeehan W.L."/>
            <person name="Dodd J.G."/>
            <person name="Matusik R.J."/>
        </authorList>
    </citation>
    <scope>NUCLEOTIDE SEQUENCE [MRNA] (ISOFORMS 1 AND 2)</scope>
    <scope>PROTEIN SEQUENCE OF 18-40</scope>
</reference>
<reference key="2">
    <citation type="journal article" date="2000" name="Biochim. Biophys. Acta">
        <title>Rat probasin: structure and function of an outlier lipocalin.</title>
        <authorList>
            <person name="Kasper S."/>
            <person name="Matusik R.J."/>
        </authorList>
    </citation>
    <scope>NUCLEOTIDE SEQUENCE [GENOMIC DNA] (ISOFORM 1)</scope>
</reference>
<reference key="3">
    <citation type="journal article" date="2004" name="Genome Res.">
        <title>The status, quality, and expansion of the NIH full-length cDNA project: the Mammalian Gene Collection (MGC).</title>
        <authorList>
            <consortium name="The MGC Project Team"/>
        </authorList>
    </citation>
    <scope>NUCLEOTIDE SEQUENCE [LARGE SCALE MRNA] (ISOFORM 1)</scope>
    <source>
        <tissue>Prostate</tissue>
    </source>
</reference>
<name>PBAS_RAT</name>
<comment type="subcellular location">
    <subcellularLocation>
        <location>Nucleus</location>
    </subcellularLocation>
    <subcellularLocation>
        <location>Secreted</location>
    </subcellularLocation>
</comment>
<comment type="alternative products">
    <event type="alternative initiation"/>
    <isoform>
        <id>P15399-1</id>
        <name>1</name>
        <name>Secreted</name>
        <sequence type="displayed"/>
    </isoform>
    <isoform>
        <id>P15399-2</id>
        <name>2</name>
        <name>Nuclear</name>
        <sequence type="described" ref="VSP_018809"/>
    </isoform>
</comment>
<comment type="tissue specificity">
    <text>Prostatic epithelial cells.</text>
</comment>
<comment type="induction">
    <text>Androgen-regulated, increases in concentration with zinc uptake.</text>
</comment>
<comment type="similarity">
    <text evidence="4">Belongs to the calycin superfamily. Lipocalin family.</text>
</comment>